<feature type="chain" id="PRO_0000048817" description="Homeobox protein araucan">
    <location>
        <begin position="1"/>
        <end position="717"/>
    </location>
</feature>
<feature type="DNA-binding region" description="Homeobox; TALE-type" evidence="1">
    <location>
        <begin position="255"/>
        <end position="317"/>
    </location>
</feature>
<feature type="region of interest" description="Disordered" evidence="2">
    <location>
        <begin position="46"/>
        <end position="80"/>
    </location>
</feature>
<feature type="region of interest" description="Disordered" evidence="2">
    <location>
        <begin position="94"/>
        <end position="130"/>
    </location>
</feature>
<feature type="region of interest" description="Disordered" evidence="2">
    <location>
        <begin position="317"/>
        <end position="371"/>
    </location>
</feature>
<feature type="region of interest" description="Disordered" evidence="2">
    <location>
        <begin position="395"/>
        <end position="418"/>
    </location>
</feature>
<feature type="region of interest" description="Disordered" evidence="2">
    <location>
        <begin position="478"/>
        <end position="516"/>
    </location>
</feature>
<feature type="region of interest" description="Disordered" evidence="2">
    <location>
        <begin position="549"/>
        <end position="615"/>
    </location>
</feature>
<feature type="region of interest" description="Disordered" evidence="2">
    <location>
        <begin position="675"/>
        <end position="717"/>
    </location>
</feature>
<feature type="compositionally biased region" description="Gly residues" evidence="2">
    <location>
        <begin position="94"/>
        <end position="103"/>
    </location>
</feature>
<feature type="compositionally biased region" description="Basic and acidic residues" evidence="2">
    <location>
        <begin position="317"/>
        <end position="327"/>
    </location>
</feature>
<feature type="compositionally biased region" description="Basic and acidic residues" evidence="2">
    <location>
        <begin position="337"/>
        <end position="347"/>
    </location>
</feature>
<feature type="compositionally biased region" description="Gly residues" evidence="2">
    <location>
        <begin position="395"/>
        <end position="410"/>
    </location>
</feature>
<feature type="compositionally biased region" description="Low complexity" evidence="2">
    <location>
        <begin position="492"/>
        <end position="507"/>
    </location>
</feature>
<feature type="compositionally biased region" description="Low complexity" evidence="2">
    <location>
        <begin position="559"/>
        <end position="589"/>
    </location>
</feature>
<feature type="compositionally biased region" description="Low complexity" evidence="2">
    <location>
        <begin position="599"/>
        <end position="614"/>
    </location>
</feature>
<feature type="compositionally biased region" description="Low complexity" evidence="2">
    <location>
        <begin position="687"/>
        <end position="698"/>
    </location>
</feature>
<feature type="modified residue" description="Phosphoserine" evidence="3">
    <location>
        <position position="336"/>
    </location>
</feature>
<feature type="sequence conflict" description="In Ref. 1; CAA64486." evidence="4" ref="1">
    <location>
        <position position="130"/>
    </location>
</feature>
<accession>Q24248</accession>
<accession>Q9VTZ9</accession>
<reference key="1">
    <citation type="journal article" date="1996" name="Cell">
        <title>Araucan and caupolican, two members of the novel iroquois complex, encode homeoproteins that control proneural and vein-forming genes.</title>
        <authorList>
            <person name="Gomez-Skarmeta J.-L."/>
            <person name="del Corral R.D."/>
            <person name="de la Calle-Mustienes E."/>
            <person name="Ferres-Marco D."/>
            <person name="Modolell J."/>
        </authorList>
    </citation>
    <scope>NUCLEOTIDE SEQUENCE [MRNA]</scope>
    <source>
        <tissue>Larva</tissue>
    </source>
</reference>
<reference key="2">
    <citation type="journal article" date="2000" name="Science">
        <title>The genome sequence of Drosophila melanogaster.</title>
        <authorList>
            <person name="Adams M.D."/>
            <person name="Celniker S.E."/>
            <person name="Holt R.A."/>
            <person name="Evans C.A."/>
            <person name="Gocayne J.D."/>
            <person name="Amanatides P.G."/>
            <person name="Scherer S.E."/>
            <person name="Li P.W."/>
            <person name="Hoskins R.A."/>
            <person name="Galle R.F."/>
            <person name="George R.A."/>
            <person name="Lewis S.E."/>
            <person name="Richards S."/>
            <person name="Ashburner M."/>
            <person name="Henderson S.N."/>
            <person name="Sutton G.G."/>
            <person name="Wortman J.R."/>
            <person name="Yandell M.D."/>
            <person name="Zhang Q."/>
            <person name="Chen L.X."/>
            <person name="Brandon R.C."/>
            <person name="Rogers Y.-H.C."/>
            <person name="Blazej R.G."/>
            <person name="Champe M."/>
            <person name="Pfeiffer B.D."/>
            <person name="Wan K.H."/>
            <person name="Doyle C."/>
            <person name="Baxter E.G."/>
            <person name="Helt G."/>
            <person name="Nelson C.R."/>
            <person name="Miklos G.L.G."/>
            <person name="Abril J.F."/>
            <person name="Agbayani A."/>
            <person name="An H.-J."/>
            <person name="Andrews-Pfannkoch C."/>
            <person name="Baldwin D."/>
            <person name="Ballew R.M."/>
            <person name="Basu A."/>
            <person name="Baxendale J."/>
            <person name="Bayraktaroglu L."/>
            <person name="Beasley E.M."/>
            <person name="Beeson K.Y."/>
            <person name="Benos P.V."/>
            <person name="Berman B.P."/>
            <person name="Bhandari D."/>
            <person name="Bolshakov S."/>
            <person name="Borkova D."/>
            <person name="Botchan M.R."/>
            <person name="Bouck J."/>
            <person name="Brokstein P."/>
            <person name="Brottier P."/>
            <person name="Burtis K.C."/>
            <person name="Busam D.A."/>
            <person name="Butler H."/>
            <person name="Cadieu E."/>
            <person name="Center A."/>
            <person name="Chandra I."/>
            <person name="Cherry J.M."/>
            <person name="Cawley S."/>
            <person name="Dahlke C."/>
            <person name="Davenport L.B."/>
            <person name="Davies P."/>
            <person name="de Pablos B."/>
            <person name="Delcher A."/>
            <person name="Deng Z."/>
            <person name="Mays A.D."/>
            <person name="Dew I."/>
            <person name="Dietz S.M."/>
            <person name="Dodson K."/>
            <person name="Doup L.E."/>
            <person name="Downes M."/>
            <person name="Dugan-Rocha S."/>
            <person name="Dunkov B.C."/>
            <person name="Dunn P."/>
            <person name="Durbin K.J."/>
            <person name="Evangelista C.C."/>
            <person name="Ferraz C."/>
            <person name="Ferriera S."/>
            <person name="Fleischmann W."/>
            <person name="Fosler C."/>
            <person name="Gabrielian A.E."/>
            <person name="Garg N.S."/>
            <person name="Gelbart W.M."/>
            <person name="Glasser K."/>
            <person name="Glodek A."/>
            <person name="Gong F."/>
            <person name="Gorrell J.H."/>
            <person name="Gu Z."/>
            <person name="Guan P."/>
            <person name="Harris M."/>
            <person name="Harris N.L."/>
            <person name="Harvey D.A."/>
            <person name="Heiman T.J."/>
            <person name="Hernandez J.R."/>
            <person name="Houck J."/>
            <person name="Hostin D."/>
            <person name="Houston K.A."/>
            <person name="Howland T.J."/>
            <person name="Wei M.-H."/>
            <person name="Ibegwam C."/>
            <person name="Jalali M."/>
            <person name="Kalush F."/>
            <person name="Karpen G.H."/>
            <person name="Ke Z."/>
            <person name="Kennison J.A."/>
            <person name="Ketchum K.A."/>
            <person name="Kimmel B.E."/>
            <person name="Kodira C.D."/>
            <person name="Kraft C.L."/>
            <person name="Kravitz S."/>
            <person name="Kulp D."/>
            <person name="Lai Z."/>
            <person name="Lasko P."/>
            <person name="Lei Y."/>
            <person name="Levitsky A.A."/>
            <person name="Li J.H."/>
            <person name="Li Z."/>
            <person name="Liang Y."/>
            <person name="Lin X."/>
            <person name="Liu X."/>
            <person name="Mattei B."/>
            <person name="McIntosh T.C."/>
            <person name="McLeod M.P."/>
            <person name="McPherson D."/>
            <person name="Merkulov G."/>
            <person name="Milshina N.V."/>
            <person name="Mobarry C."/>
            <person name="Morris J."/>
            <person name="Moshrefi A."/>
            <person name="Mount S.M."/>
            <person name="Moy M."/>
            <person name="Murphy B."/>
            <person name="Murphy L."/>
            <person name="Muzny D.M."/>
            <person name="Nelson D.L."/>
            <person name="Nelson D.R."/>
            <person name="Nelson K.A."/>
            <person name="Nixon K."/>
            <person name="Nusskern D.R."/>
            <person name="Pacleb J.M."/>
            <person name="Palazzolo M."/>
            <person name="Pittman G.S."/>
            <person name="Pan S."/>
            <person name="Pollard J."/>
            <person name="Puri V."/>
            <person name="Reese M.G."/>
            <person name="Reinert K."/>
            <person name="Remington K."/>
            <person name="Saunders R.D.C."/>
            <person name="Scheeler F."/>
            <person name="Shen H."/>
            <person name="Shue B.C."/>
            <person name="Siden-Kiamos I."/>
            <person name="Simpson M."/>
            <person name="Skupski M.P."/>
            <person name="Smith T.J."/>
            <person name="Spier E."/>
            <person name="Spradling A.C."/>
            <person name="Stapleton M."/>
            <person name="Strong R."/>
            <person name="Sun E."/>
            <person name="Svirskas R."/>
            <person name="Tector C."/>
            <person name="Turner R."/>
            <person name="Venter E."/>
            <person name="Wang A.H."/>
            <person name="Wang X."/>
            <person name="Wang Z.-Y."/>
            <person name="Wassarman D.A."/>
            <person name="Weinstock G.M."/>
            <person name="Weissenbach J."/>
            <person name="Williams S.M."/>
            <person name="Woodage T."/>
            <person name="Worley K.C."/>
            <person name="Wu D."/>
            <person name="Yang S."/>
            <person name="Yao Q.A."/>
            <person name="Ye J."/>
            <person name="Yeh R.-F."/>
            <person name="Zaveri J.S."/>
            <person name="Zhan M."/>
            <person name="Zhang G."/>
            <person name="Zhao Q."/>
            <person name="Zheng L."/>
            <person name="Zheng X.H."/>
            <person name="Zhong F.N."/>
            <person name="Zhong W."/>
            <person name="Zhou X."/>
            <person name="Zhu S.C."/>
            <person name="Zhu X."/>
            <person name="Smith H.O."/>
            <person name="Gibbs R.A."/>
            <person name="Myers E.W."/>
            <person name="Rubin G.M."/>
            <person name="Venter J.C."/>
        </authorList>
    </citation>
    <scope>NUCLEOTIDE SEQUENCE [LARGE SCALE GENOMIC DNA]</scope>
    <source>
        <strain>Berkeley</strain>
    </source>
</reference>
<reference key="3">
    <citation type="journal article" date="2002" name="Genome Biol.">
        <title>Annotation of the Drosophila melanogaster euchromatic genome: a systematic review.</title>
        <authorList>
            <person name="Misra S."/>
            <person name="Crosby M.A."/>
            <person name="Mungall C.J."/>
            <person name="Matthews B.B."/>
            <person name="Campbell K.S."/>
            <person name="Hradecky P."/>
            <person name="Huang Y."/>
            <person name="Kaminker J.S."/>
            <person name="Millburn G.H."/>
            <person name="Prochnik S.E."/>
            <person name="Smith C.D."/>
            <person name="Tupy J.L."/>
            <person name="Whitfield E.J."/>
            <person name="Bayraktaroglu L."/>
            <person name="Berman B.P."/>
            <person name="Bettencourt B.R."/>
            <person name="Celniker S.E."/>
            <person name="de Grey A.D.N.J."/>
            <person name="Drysdale R.A."/>
            <person name="Harris N.L."/>
            <person name="Richter J."/>
            <person name="Russo S."/>
            <person name="Schroeder A.J."/>
            <person name="Shu S.Q."/>
            <person name="Stapleton M."/>
            <person name="Yamada C."/>
            <person name="Ashburner M."/>
            <person name="Gelbart W.M."/>
            <person name="Rubin G.M."/>
            <person name="Lewis S.E."/>
        </authorList>
    </citation>
    <scope>GENOME REANNOTATION</scope>
    <source>
        <strain>Berkeley</strain>
    </source>
</reference>
<reference key="4">
    <citation type="journal article" date="2008" name="J. Proteome Res.">
        <title>Phosphoproteome analysis of Drosophila melanogaster embryos.</title>
        <authorList>
            <person name="Zhai B."/>
            <person name="Villen J."/>
            <person name="Beausoleil S.A."/>
            <person name="Mintseris J."/>
            <person name="Gygi S.P."/>
        </authorList>
    </citation>
    <scope>PHOSPHORYLATION [LARGE SCALE ANALYSIS] AT SER-336</scope>
    <scope>IDENTIFICATION BY MASS SPECTROMETRY</scope>
    <source>
        <tissue>Embryo</tissue>
    </source>
</reference>
<organism>
    <name type="scientific">Drosophila melanogaster</name>
    <name type="common">Fruit fly</name>
    <dbReference type="NCBI Taxonomy" id="7227"/>
    <lineage>
        <taxon>Eukaryota</taxon>
        <taxon>Metazoa</taxon>
        <taxon>Ecdysozoa</taxon>
        <taxon>Arthropoda</taxon>
        <taxon>Hexapoda</taxon>
        <taxon>Insecta</taxon>
        <taxon>Pterygota</taxon>
        <taxon>Neoptera</taxon>
        <taxon>Endopterygota</taxon>
        <taxon>Diptera</taxon>
        <taxon>Brachycera</taxon>
        <taxon>Muscomorpha</taxon>
        <taxon>Ephydroidea</taxon>
        <taxon>Drosophilidae</taxon>
        <taxon>Drosophila</taxon>
        <taxon>Sophophora</taxon>
    </lineage>
</organism>
<comment type="function">
    <text>Controls proneural and vein forming genes. Positive transcriptional controller of AC-SC (achaete-scute). May act as an activator that interacts with the transcriptional complex assembled on the AC and SC promoters and participates in transcription initiation.</text>
</comment>
<comment type="subcellular location">
    <subcellularLocation>
        <location evidence="4">Nucleus</location>
    </subcellularLocation>
</comment>
<comment type="miscellaneous">
    <text>'Araucan' is named after the Araucanian American-Indian tribe, also called Mohawks, who shaved all but a medial stripe of hairs on the head.</text>
</comment>
<comment type="similarity">
    <text evidence="4">Belongs to the TALE/IRO homeobox family.</text>
</comment>
<proteinExistence type="evidence at protein level"/>
<sequence>MAAYTQFGYGGFPSASQLLPPSVQTTEDASANVNVNVNEALVMTNAPAMSPTGGQDCQGSQPSGGAGGDASSGALSPNALSQNSNAATVVGAGGGSSAGGGGPADLATGGSLDGNGVGTTPTAGGAGGGGSCCENGRPIMTDPVSGQTVCSCQYDSARLALSSYSRLPAASVGVYGTPYPSTDQNPYQSIGVDSSAFYSPLSNPYGLKDTGAGPEMGAWTSAGLQPTTGYYSYDPMSAYGGLLVSNSSYGASYDLAARRKNATRESTATLKAWLNEHKKNPYPTKGEKIMLAIITKMTLTQVSTWFANARRRLKKENKMTWEPKNRTDDDDDALVSDDEKDKEDLEPSKGSQGSVSLAKDETKEEEDAIDEDQKCLGQANILRAGFGYPSAGSGSGGYPGGGGSSSGHPGGYHPYHHQHPAYYQAGQQGGMLPFHGENSKLQTDLGDPKNQLGRDCGVPIPATKPKIWSLADTVGCKTPPPAYMGHQSMPLQQQQQQQQQQQQAQHQYPPSEAGRDQQLFNGAAAPYLRPHTTAYGGFLGATTQQLHTTNNSIPYSNMPPQQQQPQQQQQQLQQGGTIHTTGSSSGPIIPLQFHNRHPQQQQQLQQQSQSTASQRAMGFLEAQPDTPPQTPPNMKVLSGALSLLPTATQVPMTATCRSSNAFGFPASGYPMNFSARLGEYSPRDDYSSGNSSSSSSSSPQLQRNEAMFKPLFKKFTN</sequence>
<keyword id="KW-0010">Activator</keyword>
<keyword id="KW-0217">Developmental protein</keyword>
<keyword id="KW-0238">DNA-binding</keyword>
<keyword id="KW-0371">Homeobox</keyword>
<keyword id="KW-0539">Nucleus</keyword>
<keyword id="KW-0597">Phosphoprotein</keyword>
<keyword id="KW-1185">Reference proteome</keyword>
<keyword id="KW-0804">Transcription</keyword>
<keyword id="KW-0805">Transcription regulation</keyword>
<protein>
    <recommendedName>
        <fullName>Homeobox protein araucan</fullName>
    </recommendedName>
</protein>
<evidence type="ECO:0000255" key="1">
    <source>
        <dbReference type="PROSITE-ProRule" id="PRU00108"/>
    </source>
</evidence>
<evidence type="ECO:0000256" key="2">
    <source>
        <dbReference type="SAM" id="MobiDB-lite"/>
    </source>
</evidence>
<evidence type="ECO:0000269" key="3">
    <source>
    </source>
</evidence>
<evidence type="ECO:0000305" key="4"/>
<name>ARA_DROME</name>
<dbReference type="EMBL" id="X95179">
    <property type="protein sequence ID" value="CAA64486.1"/>
    <property type="molecule type" value="mRNA"/>
</dbReference>
<dbReference type="EMBL" id="AE014296">
    <property type="protein sequence ID" value="AAF49896.1"/>
    <property type="molecule type" value="Genomic_DNA"/>
</dbReference>
<dbReference type="RefSeq" id="NP_524045.2">
    <property type="nucleotide sequence ID" value="NM_079321.3"/>
</dbReference>
<dbReference type="SMR" id="Q24248"/>
<dbReference type="BioGRID" id="64788">
    <property type="interactions" value="20"/>
</dbReference>
<dbReference type="DIP" id="DIP-18459N"/>
<dbReference type="FunCoup" id="Q24248">
    <property type="interactions" value="64"/>
</dbReference>
<dbReference type="IntAct" id="Q24248">
    <property type="interactions" value="7"/>
</dbReference>
<dbReference type="STRING" id="7227.FBpp0075640"/>
<dbReference type="GlyGen" id="Q24248">
    <property type="glycosylation" value="2 sites"/>
</dbReference>
<dbReference type="iPTMnet" id="Q24248"/>
<dbReference type="PaxDb" id="7227-FBpp0075640"/>
<dbReference type="EnsemblMetazoa" id="FBtr0075908">
    <property type="protein sequence ID" value="FBpp0075640"/>
    <property type="gene ID" value="FBgn0015904"/>
</dbReference>
<dbReference type="GeneID" id="39439"/>
<dbReference type="KEGG" id="dme:Dmel_CG10571"/>
<dbReference type="AGR" id="FB:FBgn0015904"/>
<dbReference type="CTD" id="39439"/>
<dbReference type="FlyBase" id="FBgn0015904">
    <property type="gene designation" value="ara"/>
</dbReference>
<dbReference type="VEuPathDB" id="VectorBase:FBgn0015904"/>
<dbReference type="eggNOG" id="KOG0773">
    <property type="taxonomic scope" value="Eukaryota"/>
</dbReference>
<dbReference type="GeneTree" id="ENSGT00940000165426"/>
<dbReference type="InParanoid" id="Q24248"/>
<dbReference type="OMA" id="NEPMRHV"/>
<dbReference type="OrthoDB" id="5399138at2759"/>
<dbReference type="PhylomeDB" id="Q24248"/>
<dbReference type="SignaLink" id="Q24248"/>
<dbReference type="BioGRID-ORCS" id="39439">
    <property type="hits" value="0 hits in 3 CRISPR screens"/>
</dbReference>
<dbReference type="GenomeRNAi" id="39439"/>
<dbReference type="PRO" id="PR:Q24248"/>
<dbReference type="Proteomes" id="UP000000803">
    <property type="component" value="Chromosome 3L"/>
</dbReference>
<dbReference type="Bgee" id="FBgn0015904">
    <property type="expression patterns" value="Expressed in leg taste bristle chemosensory neuron in post-embryonic organism and 63 other cell types or tissues"/>
</dbReference>
<dbReference type="ExpressionAtlas" id="Q24248">
    <property type="expression patterns" value="baseline and differential"/>
</dbReference>
<dbReference type="GO" id="GO:0005737">
    <property type="term" value="C:cytoplasm"/>
    <property type="evidence" value="ECO:0007005"/>
    <property type="project" value="FlyBase"/>
</dbReference>
<dbReference type="GO" id="GO:0005634">
    <property type="term" value="C:nucleus"/>
    <property type="evidence" value="ECO:0000250"/>
    <property type="project" value="FlyBase"/>
</dbReference>
<dbReference type="GO" id="GO:0000981">
    <property type="term" value="F:DNA-binding transcription factor activity, RNA polymerase II-specific"/>
    <property type="evidence" value="ECO:0000314"/>
    <property type="project" value="FlyBase"/>
</dbReference>
<dbReference type="GO" id="GO:0000978">
    <property type="term" value="F:RNA polymerase II cis-regulatory region sequence-specific DNA binding"/>
    <property type="evidence" value="ECO:0000318"/>
    <property type="project" value="GO_Central"/>
</dbReference>
<dbReference type="GO" id="GO:0048468">
    <property type="term" value="P:cell development"/>
    <property type="evidence" value="ECO:0000318"/>
    <property type="project" value="GO_Central"/>
</dbReference>
<dbReference type="GO" id="GO:0001745">
    <property type="term" value="P:compound eye morphogenesis"/>
    <property type="evidence" value="ECO:0000315"/>
    <property type="project" value="FlyBase"/>
</dbReference>
<dbReference type="GO" id="GO:0048813">
    <property type="term" value="P:dendrite morphogenesis"/>
    <property type="evidence" value="ECO:0000315"/>
    <property type="project" value="FlyBase"/>
</dbReference>
<dbReference type="GO" id="GO:0045317">
    <property type="term" value="P:equator specification"/>
    <property type="evidence" value="ECO:0000304"/>
    <property type="project" value="FlyBase"/>
</dbReference>
<dbReference type="GO" id="GO:0007476">
    <property type="term" value="P:imaginal disc-derived wing morphogenesis"/>
    <property type="evidence" value="ECO:0000315"/>
    <property type="project" value="FlyBase"/>
</dbReference>
<dbReference type="GO" id="GO:0007474">
    <property type="term" value="P:imaginal disc-derived wing vein specification"/>
    <property type="evidence" value="ECO:0000316"/>
    <property type="project" value="FlyBase"/>
</dbReference>
<dbReference type="GO" id="GO:0042693">
    <property type="term" value="P:muscle cell fate commitment"/>
    <property type="evidence" value="ECO:0000316"/>
    <property type="project" value="FlyBase"/>
</dbReference>
<dbReference type="GO" id="GO:0045926">
    <property type="term" value="P:negative regulation of growth"/>
    <property type="evidence" value="ECO:0000315"/>
    <property type="project" value="FlyBase"/>
</dbReference>
<dbReference type="GO" id="GO:0030182">
    <property type="term" value="P:neuron differentiation"/>
    <property type="evidence" value="ECO:0000318"/>
    <property type="project" value="GO_Central"/>
</dbReference>
<dbReference type="GO" id="GO:0035310">
    <property type="term" value="P:notum cell fate specification"/>
    <property type="evidence" value="ECO:0000315"/>
    <property type="project" value="FlyBase"/>
</dbReference>
<dbReference type="GO" id="GO:0045893">
    <property type="term" value="P:positive regulation of DNA-templated transcription"/>
    <property type="evidence" value="ECO:0000303"/>
    <property type="project" value="FlyBase"/>
</dbReference>
<dbReference type="GO" id="GO:0045944">
    <property type="term" value="P:positive regulation of transcription by RNA polymerase II"/>
    <property type="evidence" value="ECO:0000315"/>
    <property type="project" value="FlyBase"/>
</dbReference>
<dbReference type="GO" id="GO:0006357">
    <property type="term" value="P:regulation of transcription by RNA polymerase II"/>
    <property type="evidence" value="ECO:0000318"/>
    <property type="project" value="GO_Central"/>
</dbReference>
<dbReference type="CDD" id="cd00086">
    <property type="entry name" value="homeodomain"/>
    <property type="match status" value="1"/>
</dbReference>
<dbReference type="FunFam" id="1.10.10.60:FF:000003">
    <property type="entry name" value="Iroquois-class homeobox protein IRX"/>
    <property type="match status" value="1"/>
</dbReference>
<dbReference type="Gene3D" id="1.10.10.60">
    <property type="entry name" value="Homeodomain-like"/>
    <property type="match status" value="1"/>
</dbReference>
<dbReference type="InterPro" id="IPR001356">
    <property type="entry name" value="HD"/>
</dbReference>
<dbReference type="InterPro" id="IPR017970">
    <property type="entry name" value="Homeobox_CS"/>
</dbReference>
<dbReference type="InterPro" id="IPR009057">
    <property type="entry name" value="Homeodomain-like_sf"/>
</dbReference>
<dbReference type="InterPro" id="IPR003893">
    <property type="entry name" value="Iroquois_homeo"/>
</dbReference>
<dbReference type="InterPro" id="IPR008422">
    <property type="entry name" value="KN_HD"/>
</dbReference>
<dbReference type="PANTHER" id="PTHR11211:SF46">
    <property type="entry name" value="HOMEOBOX PROTEIN ARAUCAN-RELATED"/>
    <property type="match status" value="1"/>
</dbReference>
<dbReference type="PANTHER" id="PTHR11211">
    <property type="entry name" value="IROQUOIS-CLASS HOMEODOMAIN PROTEIN IRX"/>
    <property type="match status" value="1"/>
</dbReference>
<dbReference type="Pfam" id="PF05920">
    <property type="entry name" value="Homeobox_KN"/>
    <property type="match status" value="1"/>
</dbReference>
<dbReference type="SMART" id="SM00389">
    <property type="entry name" value="HOX"/>
    <property type="match status" value="1"/>
</dbReference>
<dbReference type="SMART" id="SM00548">
    <property type="entry name" value="IRO"/>
    <property type="match status" value="1"/>
</dbReference>
<dbReference type="SUPFAM" id="SSF46689">
    <property type="entry name" value="Homeodomain-like"/>
    <property type="match status" value="1"/>
</dbReference>
<dbReference type="PROSITE" id="PS00027">
    <property type="entry name" value="HOMEOBOX_1"/>
    <property type="match status" value="1"/>
</dbReference>
<dbReference type="PROSITE" id="PS50071">
    <property type="entry name" value="HOMEOBOX_2"/>
    <property type="match status" value="1"/>
</dbReference>
<gene>
    <name type="primary">ara</name>
    <name type="ORF">CG10571</name>
</gene>